<dbReference type="EMBL" id="CP000786">
    <property type="protein sequence ID" value="ABZ96700.1"/>
    <property type="molecule type" value="Genomic_DNA"/>
</dbReference>
<dbReference type="SMR" id="B0SJA9"/>
<dbReference type="STRING" id="456481.LEPBI_I0562"/>
<dbReference type="KEGG" id="lbi:LEPBI_I0562"/>
<dbReference type="HOGENOM" id="CLU_033732_3_2_12"/>
<dbReference type="OrthoDB" id="9804921at2"/>
<dbReference type="BioCyc" id="LBIF456481:LEPBI_RS02760-MONOMER"/>
<dbReference type="Proteomes" id="UP000001847">
    <property type="component" value="Chromosome I"/>
</dbReference>
<dbReference type="GO" id="GO:0005829">
    <property type="term" value="C:cytosol"/>
    <property type="evidence" value="ECO:0007669"/>
    <property type="project" value="TreeGrafter"/>
</dbReference>
<dbReference type="GO" id="GO:0005525">
    <property type="term" value="F:GTP binding"/>
    <property type="evidence" value="ECO:0007669"/>
    <property type="project" value="UniProtKB-UniRule"/>
</dbReference>
<dbReference type="GO" id="GO:0046872">
    <property type="term" value="F:metal ion binding"/>
    <property type="evidence" value="ECO:0007669"/>
    <property type="project" value="UniProtKB-KW"/>
</dbReference>
<dbReference type="GO" id="GO:0000917">
    <property type="term" value="P:division septum assembly"/>
    <property type="evidence" value="ECO:0007669"/>
    <property type="project" value="UniProtKB-KW"/>
</dbReference>
<dbReference type="CDD" id="cd01876">
    <property type="entry name" value="YihA_EngB"/>
    <property type="match status" value="1"/>
</dbReference>
<dbReference type="Gene3D" id="3.40.50.300">
    <property type="entry name" value="P-loop containing nucleotide triphosphate hydrolases"/>
    <property type="match status" value="1"/>
</dbReference>
<dbReference type="HAMAP" id="MF_00321">
    <property type="entry name" value="GTPase_EngB"/>
    <property type="match status" value="1"/>
</dbReference>
<dbReference type="InterPro" id="IPR030393">
    <property type="entry name" value="G_ENGB_dom"/>
</dbReference>
<dbReference type="InterPro" id="IPR006073">
    <property type="entry name" value="GTP-bd"/>
</dbReference>
<dbReference type="InterPro" id="IPR019987">
    <property type="entry name" value="GTP-bd_ribosome_bio_YsxC"/>
</dbReference>
<dbReference type="InterPro" id="IPR027417">
    <property type="entry name" value="P-loop_NTPase"/>
</dbReference>
<dbReference type="NCBIfam" id="TIGR03598">
    <property type="entry name" value="GTPase_YsxC"/>
    <property type="match status" value="1"/>
</dbReference>
<dbReference type="PANTHER" id="PTHR11649:SF13">
    <property type="entry name" value="ENGB-TYPE G DOMAIN-CONTAINING PROTEIN"/>
    <property type="match status" value="1"/>
</dbReference>
<dbReference type="PANTHER" id="PTHR11649">
    <property type="entry name" value="MSS1/TRME-RELATED GTP-BINDING PROTEIN"/>
    <property type="match status" value="1"/>
</dbReference>
<dbReference type="Pfam" id="PF01926">
    <property type="entry name" value="MMR_HSR1"/>
    <property type="match status" value="1"/>
</dbReference>
<dbReference type="SUPFAM" id="SSF52540">
    <property type="entry name" value="P-loop containing nucleoside triphosphate hydrolases"/>
    <property type="match status" value="1"/>
</dbReference>
<dbReference type="PROSITE" id="PS51706">
    <property type="entry name" value="G_ENGB"/>
    <property type="match status" value="1"/>
</dbReference>
<reference key="1">
    <citation type="journal article" date="2008" name="PLoS ONE">
        <title>Genome sequence of the saprophyte Leptospira biflexa provides insights into the evolution of Leptospira and the pathogenesis of leptospirosis.</title>
        <authorList>
            <person name="Picardeau M."/>
            <person name="Bulach D.M."/>
            <person name="Bouchier C."/>
            <person name="Zuerner R.L."/>
            <person name="Zidane N."/>
            <person name="Wilson P.J."/>
            <person name="Creno S."/>
            <person name="Kuczek E.S."/>
            <person name="Bommezzadri S."/>
            <person name="Davis J.C."/>
            <person name="McGrath A."/>
            <person name="Johnson M.J."/>
            <person name="Boursaux-Eude C."/>
            <person name="Seemann T."/>
            <person name="Rouy Z."/>
            <person name="Coppel R.L."/>
            <person name="Rood J.I."/>
            <person name="Lajus A."/>
            <person name="Davies J.K."/>
            <person name="Medigue C."/>
            <person name="Adler B."/>
        </authorList>
    </citation>
    <scope>NUCLEOTIDE SEQUENCE [LARGE SCALE GENOMIC DNA]</scope>
    <source>
        <strain>Patoc 1 / ATCC 23582 / Paris</strain>
    </source>
</reference>
<proteinExistence type="inferred from homology"/>
<gene>
    <name evidence="1" type="primary">engB</name>
    <name type="ordered locus">LEPBI_I0562</name>
</gene>
<protein>
    <recommendedName>
        <fullName evidence="1">Probable GTP-binding protein EngB</fullName>
    </recommendedName>
</protein>
<keyword id="KW-0131">Cell cycle</keyword>
<keyword id="KW-0132">Cell division</keyword>
<keyword id="KW-0342">GTP-binding</keyword>
<keyword id="KW-0460">Magnesium</keyword>
<keyword id="KW-0479">Metal-binding</keyword>
<keyword id="KW-0547">Nucleotide-binding</keyword>
<keyword id="KW-1185">Reference proteome</keyword>
<keyword id="KW-0717">Septation</keyword>
<sequence>MHKYSKEIPFPETKFFTSIAKLDEKEDLDSVQSIAFMGRSNSGKSSLLNALSNHRGLAKVSRTPGKTKLINIFRTKVGFNLVDLPGFGYSKASHKEHKDMMNLLEGFLNSWKQLKILFILCDSQRDFPEEELSTIEVAMEKKIKPVVIRTKIDKLNQSGQHKVRTEMEAAMNEIGIPFRVFYISASTGRGIGELREFILETLGIQTKVSNVEP</sequence>
<organism>
    <name type="scientific">Leptospira biflexa serovar Patoc (strain Patoc 1 / ATCC 23582 / Paris)</name>
    <dbReference type="NCBI Taxonomy" id="456481"/>
    <lineage>
        <taxon>Bacteria</taxon>
        <taxon>Pseudomonadati</taxon>
        <taxon>Spirochaetota</taxon>
        <taxon>Spirochaetia</taxon>
        <taxon>Leptospirales</taxon>
        <taxon>Leptospiraceae</taxon>
        <taxon>Leptospira</taxon>
    </lineage>
</organism>
<evidence type="ECO:0000255" key="1">
    <source>
        <dbReference type="HAMAP-Rule" id="MF_00321"/>
    </source>
</evidence>
<feature type="chain" id="PRO_1000189927" description="Probable GTP-binding protein EngB">
    <location>
        <begin position="1"/>
        <end position="213"/>
    </location>
</feature>
<feature type="domain" description="EngB-type G" evidence="1">
    <location>
        <begin position="30"/>
        <end position="204"/>
    </location>
</feature>
<feature type="binding site" evidence="1">
    <location>
        <begin position="38"/>
        <end position="45"/>
    </location>
    <ligand>
        <name>GTP</name>
        <dbReference type="ChEBI" id="CHEBI:37565"/>
    </ligand>
</feature>
<feature type="binding site" evidence="1">
    <location>
        <position position="45"/>
    </location>
    <ligand>
        <name>Mg(2+)</name>
        <dbReference type="ChEBI" id="CHEBI:18420"/>
    </ligand>
</feature>
<feature type="binding site" evidence="1">
    <location>
        <begin position="65"/>
        <end position="69"/>
    </location>
    <ligand>
        <name>GTP</name>
        <dbReference type="ChEBI" id="CHEBI:37565"/>
    </ligand>
</feature>
<feature type="binding site" evidence="1">
    <location>
        <position position="67"/>
    </location>
    <ligand>
        <name>Mg(2+)</name>
        <dbReference type="ChEBI" id="CHEBI:18420"/>
    </ligand>
</feature>
<feature type="binding site" evidence="1">
    <location>
        <begin position="83"/>
        <end position="86"/>
    </location>
    <ligand>
        <name>GTP</name>
        <dbReference type="ChEBI" id="CHEBI:37565"/>
    </ligand>
</feature>
<feature type="binding site" evidence="1">
    <location>
        <begin position="150"/>
        <end position="153"/>
    </location>
    <ligand>
        <name>GTP</name>
        <dbReference type="ChEBI" id="CHEBI:37565"/>
    </ligand>
</feature>
<feature type="binding site" evidence="1">
    <location>
        <begin position="183"/>
        <end position="185"/>
    </location>
    <ligand>
        <name>GTP</name>
        <dbReference type="ChEBI" id="CHEBI:37565"/>
    </ligand>
</feature>
<name>ENGB_LEPBP</name>
<comment type="function">
    <text evidence="1">Necessary for normal cell division and for the maintenance of normal septation.</text>
</comment>
<comment type="cofactor">
    <cofactor evidence="1">
        <name>Mg(2+)</name>
        <dbReference type="ChEBI" id="CHEBI:18420"/>
    </cofactor>
</comment>
<comment type="similarity">
    <text evidence="1">Belongs to the TRAFAC class TrmE-Era-EngA-EngB-Septin-like GTPase superfamily. EngB GTPase family.</text>
</comment>
<accession>B0SJA9</accession>